<feature type="signal peptide" evidence="1">
    <location>
        <begin position="1"/>
        <end position="23"/>
    </location>
</feature>
<feature type="chain" id="PRO_0000004850" description="Cecropin-C">
    <location>
        <begin position="24"/>
        <end position="62"/>
    </location>
</feature>
<feature type="modified residue" description="Arginine amide" evidence="1">
    <location>
        <position position="62"/>
    </location>
</feature>
<comment type="function">
    <text>Cecropins have lytic and antibacterial activity against several Gram-positive and Gram-negative bacteria.</text>
</comment>
<comment type="subcellular location">
    <subcellularLocation>
        <location>Secreted</location>
    </subcellularLocation>
</comment>
<comment type="developmental stage">
    <text>Expressed during metamorphosis in pupae.</text>
</comment>
<comment type="similarity">
    <text evidence="2">Belongs to the cecropin family.</text>
</comment>
<keyword id="KW-0027">Amidation</keyword>
<keyword id="KW-0044">Antibiotic</keyword>
<keyword id="KW-0929">Antimicrobial</keyword>
<keyword id="KW-0391">Immunity</keyword>
<keyword id="KW-0399">Innate immunity</keyword>
<keyword id="KW-0964">Secreted</keyword>
<keyword id="KW-0732">Signal</keyword>
<evidence type="ECO:0000250" key="1"/>
<evidence type="ECO:0000305" key="2"/>
<organism>
    <name type="scientific">Drosophila orena</name>
    <name type="common">Fruit fly</name>
    <dbReference type="NCBI Taxonomy" id="7233"/>
    <lineage>
        <taxon>Eukaryota</taxon>
        <taxon>Metazoa</taxon>
        <taxon>Ecdysozoa</taxon>
        <taxon>Arthropoda</taxon>
        <taxon>Hexapoda</taxon>
        <taxon>Insecta</taxon>
        <taxon>Pterygota</taxon>
        <taxon>Neoptera</taxon>
        <taxon>Endopterygota</taxon>
        <taxon>Diptera</taxon>
        <taxon>Brachycera</taxon>
        <taxon>Muscomorpha</taxon>
        <taxon>Ephydroidea</taxon>
        <taxon>Drosophilidae</taxon>
        <taxon>Drosophila</taxon>
        <taxon>Sophophora</taxon>
    </lineage>
</organism>
<dbReference type="EMBL" id="AB047061">
    <property type="protein sequence ID" value="BAB78566.1"/>
    <property type="molecule type" value="Genomic_DNA"/>
</dbReference>
<dbReference type="SMR" id="P84223"/>
<dbReference type="GO" id="GO:0005615">
    <property type="term" value="C:extracellular space"/>
    <property type="evidence" value="ECO:0007669"/>
    <property type="project" value="TreeGrafter"/>
</dbReference>
<dbReference type="GO" id="GO:0019731">
    <property type="term" value="P:antibacterial humoral response"/>
    <property type="evidence" value="ECO:0007669"/>
    <property type="project" value="InterPro"/>
</dbReference>
<dbReference type="GO" id="GO:0050829">
    <property type="term" value="P:defense response to Gram-negative bacterium"/>
    <property type="evidence" value="ECO:0007669"/>
    <property type="project" value="TreeGrafter"/>
</dbReference>
<dbReference type="GO" id="GO:0050830">
    <property type="term" value="P:defense response to Gram-positive bacterium"/>
    <property type="evidence" value="ECO:0007669"/>
    <property type="project" value="UniProtKB-ARBA"/>
</dbReference>
<dbReference type="GO" id="GO:0045087">
    <property type="term" value="P:innate immune response"/>
    <property type="evidence" value="ECO:0007669"/>
    <property type="project" value="UniProtKB-KW"/>
</dbReference>
<dbReference type="InterPro" id="IPR000875">
    <property type="entry name" value="Cecropin"/>
</dbReference>
<dbReference type="InterPro" id="IPR020400">
    <property type="entry name" value="Cecropin_insect"/>
</dbReference>
<dbReference type="PANTHER" id="PTHR38329">
    <property type="entry name" value="CECROPIN-A1-RELATED"/>
    <property type="match status" value="1"/>
</dbReference>
<dbReference type="PANTHER" id="PTHR38329:SF1">
    <property type="entry name" value="CECROPIN-A1-RELATED"/>
    <property type="match status" value="1"/>
</dbReference>
<dbReference type="Pfam" id="PF00272">
    <property type="entry name" value="Cecropin"/>
    <property type="match status" value="1"/>
</dbReference>
<dbReference type="PROSITE" id="PS00268">
    <property type="entry name" value="CECROPIN"/>
    <property type="match status" value="1"/>
</dbReference>
<protein>
    <recommendedName>
        <fullName>Cecropin-C</fullName>
    </recommendedName>
</protein>
<reference key="1">
    <citation type="journal article" date="2002" name="J. Mol. Evol.">
        <title>Rapid evolution of the male-specific antibacterial protein andropin gene in Drosophila.</title>
        <authorList>
            <person name="Date-Ito A."/>
            <person name="Kasahara K."/>
            <person name="Sawai H."/>
            <person name="Chigusa S.I."/>
        </authorList>
    </citation>
    <scope>NUCLEOTIDE SEQUENCE [GENOMIC DNA]</scope>
</reference>
<sequence length="63" mass="6764">MNFNKIFVFVALILAISLGQSEAGWLKKLGKRIERIGQHTRDATIQGLGIAQQAANVAATARG</sequence>
<accession>P84223</accession>
<accession>Q8WP47</accession>
<gene>
    <name type="primary">CecC</name>
</gene>
<name>CECC_DROOR</name>
<proteinExistence type="evidence at transcript level"/>